<proteinExistence type="inferred from homology"/>
<comment type="catalytic activity">
    <reaction evidence="1">
        <text>(R)-pantothenate + ATP = (R)-4'-phosphopantothenate + ADP + H(+)</text>
        <dbReference type="Rhea" id="RHEA:16373"/>
        <dbReference type="ChEBI" id="CHEBI:10986"/>
        <dbReference type="ChEBI" id="CHEBI:15378"/>
        <dbReference type="ChEBI" id="CHEBI:29032"/>
        <dbReference type="ChEBI" id="CHEBI:30616"/>
        <dbReference type="ChEBI" id="CHEBI:456216"/>
        <dbReference type="EC" id="2.7.1.33"/>
    </reaction>
</comment>
<comment type="pathway">
    <text evidence="1">Cofactor biosynthesis; coenzyme A biosynthesis; CoA from (R)-pantothenate: step 1/5.</text>
</comment>
<comment type="subcellular location">
    <subcellularLocation>
        <location evidence="1">Cytoplasm</location>
    </subcellularLocation>
</comment>
<comment type="similarity">
    <text evidence="1">Belongs to the prokaryotic pantothenate kinase family.</text>
</comment>
<sequence>MSNEFINFEKISRESWKTLHQKAKALLTQEELKSITSLNDNISINDVIDIYLPLINLIQVYKIAQENLSFSKSLFLKKDIQLRPFIIGISGSVAVGKSTTSRLLQLLLSRTHPNSQVELVTTDGFLYPNQFLIEQGLLNRKGFPESYNMELLLDFLDSIKNGQTAFAPVYSHDIYDIIPNQKQSFNNPDFLIVEGINVFQNQQNNRLYMSDYFDFSIYIDADSSHIETWYIERFLSILKLAKRDPHNYYAQYAQLPRSEAIAFARNVWKTVNLENLEKFIEPTRNRAELILHKSADHKIDEIYLKK</sequence>
<feature type="chain" id="PRO_0000194458" description="Pantothenate kinase">
    <location>
        <begin position="1"/>
        <end position="306"/>
    </location>
</feature>
<feature type="binding site" evidence="1">
    <location>
        <begin position="91"/>
        <end position="98"/>
    </location>
    <ligand>
        <name>ATP</name>
        <dbReference type="ChEBI" id="CHEBI:30616"/>
    </ligand>
</feature>
<protein>
    <recommendedName>
        <fullName evidence="1">Pantothenate kinase</fullName>
        <ecNumber evidence="1">2.7.1.33</ecNumber>
    </recommendedName>
    <alternativeName>
        <fullName evidence="1">Pantothenic acid kinase</fullName>
    </alternativeName>
</protein>
<dbReference type="EC" id="2.7.1.33" evidence="1"/>
<dbReference type="EMBL" id="CP000003">
    <property type="protein sequence ID" value="AAT87069.1"/>
    <property type="molecule type" value="Genomic_DNA"/>
</dbReference>
<dbReference type="RefSeq" id="WP_010922353.1">
    <property type="nucleotide sequence ID" value="NC_006086.1"/>
</dbReference>
<dbReference type="SMR" id="Q5XBZ4"/>
<dbReference type="GeneID" id="69900800"/>
<dbReference type="KEGG" id="spa:M6_Spy0934"/>
<dbReference type="HOGENOM" id="CLU_053818_1_1_9"/>
<dbReference type="UniPathway" id="UPA00241">
    <property type="reaction ID" value="UER00352"/>
</dbReference>
<dbReference type="Proteomes" id="UP000001167">
    <property type="component" value="Chromosome"/>
</dbReference>
<dbReference type="GO" id="GO:0005737">
    <property type="term" value="C:cytoplasm"/>
    <property type="evidence" value="ECO:0007669"/>
    <property type="project" value="UniProtKB-SubCell"/>
</dbReference>
<dbReference type="GO" id="GO:0005524">
    <property type="term" value="F:ATP binding"/>
    <property type="evidence" value="ECO:0007669"/>
    <property type="project" value="UniProtKB-UniRule"/>
</dbReference>
<dbReference type="GO" id="GO:0004594">
    <property type="term" value="F:pantothenate kinase activity"/>
    <property type="evidence" value="ECO:0007669"/>
    <property type="project" value="UniProtKB-UniRule"/>
</dbReference>
<dbReference type="GO" id="GO:0015937">
    <property type="term" value="P:coenzyme A biosynthetic process"/>
    <property type="evidence" value="ECO:0007669"/>
    <property type="project" value="UniProtKB-UniRule"/>
</dbReference>
<dbReference type="CDD" id="cd02025">
    <property type="entry name" value="PanK"/>
    <property type="match status" value="1"/>
</dbReference>
<dbReference type="Gene3D" id="3.40.50.300">
    <property type="entry name" value="P-loop containing nucleotide triphosphate hydrolases"/>
    <property type="match status" value="1"/>
</dbReference>
<dbReference type="HAMAP" id="MF_00215">
    <property type="entry name" value="Pantothen_kinase_1"/>
    <property type="match status" value="1"/>
</dbReference>
<dbReference type="InterPro" id="IPR027417">
    <property type="entry name" value="P-loop_NTPase"/>
</dbReference>
<dbReference type="InterPro" id="IPR004566">
    <property type="entry name" value="PanK"/>
</dbReference>
<dbReference type="InterPro" id="IPR006083">
    <property type="entry name" value="PRK/URK"/>
</dbReference>
<dbReference type="NCBIfam" id="TIGR00554">
    <property type="entry name" value="panK_bact"/>
    <property type="match status" value="1"/>
</dbReference>
<dbReference type="PANTHER" id="PTHR10285">
    <property type="entry name" value="URIDINE KINASE"/>
    <property type="match status" value="1"/>
</dbReference>
<dbReference type="Pfam" id="PF00485">
    <property type="entry name" value="PRK"/>
    <property type="match status" value="1"/>
</dbReference>
<dbReference type="PIRSF" id="PIRSF000545">
    <property type="entry name" value="Pantothenate_kin"/>
    <property type="match status" value="1"/>
</dbReference>
<dbReference type="SUPFAM" id="SSF52540">
    <property type="entry name" value="P-loop containing nucleoside triphosphate hydrolases"/>
    <property type="match status" value="1"/>
</dbReference>
<evidence type="ECO:0000255" key="1">
    <source>
        <dbReference type="HAMAP-Rule" id="MF_00215"/>
    </source>
</evidence>
<accession>Q5XBZ4</accession>
<keyword id="KW-0067">ATP-binding</keyword>
<keyword id="KW-0173">Coenzyme A biosynthesis</keyword>
<keyword id="KW-0963">Cytoplasm</keyword>
<keyword id="KW-0418">Kinase</keyword>
<keyword id="KW-0547">Nucleotide-binding</keyword>
<keyword id="KW-0808">Transferase</keyword>
<organism>
    <name type="scientific">Streptococcus pyogenes serotype M6 (strain ATCC BAA-946 / MGAS10394)</name>
    <dbReference type="NCBI Taxonomy" id="286636"/>
    <lineage>
        <taxon>Bacteria</taxon>
        <taxon>Bacillati</taxon>
        <taxon>Bacillota</taxon>
        <taxon>Bacilli</taxon>
        <taxon>Lactobacillales</taxon>
        <taxon>Streptococcaceae</taxon>
        <taxon>Streptococcus</taxon>
    </lineage>
</organism>
<reference key="1">
    <citation type="journal article" date="2004" name="J. Infect. Dis.">
        <title>Progress toward characterization of the group A Streptococcus metagenome: complete genome sequence of a macrolide-resistant serotype M6 strain.</title>
        <authorList>
            <person name="Banks D.J."/>
            <person name="Porcella S.F."/>
            <person name="Barbian K.D."/>
            <person name="Beres S.B."/>
            <person name="Philips L.E."/>
            <person name="Voyich J.M."/>
            <person name="DeLeo F.R."/>
            <person name="Martin J.M."/>
            <person name="Somerville G.A."/>
            <person name="Musser J.M."/>
        </authorList>
    </citation>
    <scope>NUCLEOTIDE SEQUENCE [LARGE SCALE GENOMIC DNA]</scope>
    <source>
        <strain>ATCC BAA-946 / MGAS10394</strain>
    </source>
</reference>
<name>COAA_STRP6</name>
<gene>
    <name evidence="1" type="primary">coaA</name>
    <name type="ordered locus">M6_Spy0934</name>
</gene>